<accession>A2RL65</accession>
<comment type="function">
    <text evidence="2">Involved in aspartate and glutamate uptake. Plays no significant role in the excretion of accumulated glutamate.</text>
</comment>
<comment type="subcellular location">
    <subcellularLocation>
        <location evidence="4">Cell membrane</location>
        <topology evidence="1">Multi-pass membrane protein</topology>
    </subcellularLocation>
</comment>
<comment type="disruption phenotype">
    <text evidence="2">Disruption of the gene leads to strong reduction of aspartate uptake, but only marginally affects glutamate uptake.</text>
</comment>
<comment type="similarity">
    <text evidence="4">Belongs to the amino acid-polyamine-organocation (APC) superfamily. Glutamate:GABA antiporter (GGA) (TC 2.A.3.7) family.</text>
</comment>
<evidence type="ECO:0000255" key="1"/>
<evidence type="ECO:0000269" key="2">
    <source>
    </source>
</evidence>
<evidence type="ECO:0000303" key="3">
    <source>
    </source>
</evidence>
<evidence type="ECO:0000305" key="4"/>
<evidence type="ECO:0000312" key="5">
    <source>
        <dbReference type="EMBL" id="CAL98032.1"/>
    </source>
</evidence>
<gene>
    <name evidence="3" type="primary">acaP</name>
    <name evidence="5" type="ordered locus">llmg_1452</name>
</gene>
<organism>
    <name type="scientific">Lactococcus lactis subsp. cremoris (strain MG1363)</name>
    <dbReference type="NCBI Taxonomy" id="416870"/>
    <lineage>
        <taxon>Bacteria</taxon>
        <taxon>Bacillati</taxon>
        <taxon>Bacillota</taxon>
        <taxon>Bacilli</taxon>
        <taxon>Lactobacillales</taxon>
        <taxon>Streptococcaceae</taxon>
        <taxon>Lactococcus</taxon>
        <taxon>Lactococcus cremoris subsp. cremoris</taxon>
    </lineage>
</organism>
<keyword id="KW-0029">Amino-acid transport</keyword>
<keyword id="KW-1003">Cell membrane</keyword>
<keyword id="KW-0472">Membrane</keyword>
<keyword id="KW-0812">Transmembrane</keyword>
<keyword id="KW-1133">Transmembrane helix</keyword>
<keyword id="KW-0813">Transport</keyword>
<proteinExistence type="inferred from homology"/>
<sequence>MDTKKIRWFTVAFIAFNMVWGMGNVVNNFAQQGITVVTSWLLILALYFIPYALIVGQLCSTFKDSKGGVSSWVENTSTKRLAYYAAWTYWVVHIPYLAQKPQAILIAFGWVGQGNGNLVSQMSMTAVALISLAIFLAFLWLSTKGLNTLKVIGGLAGTAMFVMSLLFIVMAIGAPFIAKDFHIATPDMGNIKTYIPKFDFSYFTTISMLVFAVGGAEKISPYVNQTKNPAKEFPRGMFLLAGMVGICAVLGSIAMGMIFSSGNLPKDLMANGAYAAFQILGQHFGVGNFLMIVYALTNGVGQIAALAFSIDAPLRILLADADPEYVPAWLRKKTNKGTLKNGYTLTGILVSIIILLPLLGIGDMNELVKWLTNLNSVVMPMRYLWVFFAFIMLNRAVKHFQSEYKFIKQKRLAMIAGAWCFLFTLIACVLGMVPKLDYAANPSAWWFQLASNILTPIVLILLGMLLPFIARREQRKATSLDLDTIVTPD</sequence>
<name>ACAP_LACLM</name>
<dbReference type="EMBL" id="AM406671">
    <property type="protein sequence ID" value="CAL98032.1"/>
    <property type="molecule type" value="Genomic_DNA"/>
</dbReference>
<dbReference type="RefSeq" id="WP_011835304.1">
    <property type="nucleotide sequence ID" value="NC_009004.1"/>
</dbReference>
<dbReference type="SMR" id="A2RL65"/>
<dbReference type="STRING" id="416870.llmg_1452"/>
<dbReference type="KEGG" id="llm:llmg_1452"/>
<dbReference type="eggNOG" id="COG0531">
    <property type="taxonomic scope" value="Bacteria"/>
</dbReference>
<dbReference type="HOGENOM" id="CLU_020854_0_1_9"/>
<dbReference type="OrthoDB" id="92719at2"/>
<dbReference type="PhylomeDB" id="A2RL65"/>
<dbReference type="Proteomes" id="UP000000364">
    <property type="component" value="Chromosome"/>
</dbReference>
<dbReference type="GO" id="GO:0005886">
    <property type="term" value="C:plasma membrane"/>
    <property type="evidence" value="ECO:0007669"/>
    <property type="project" value="UniProtKB-SubCell"/>
</dbReference>
<dbReference type="GO" id="GO:0022857">
    <property type="term" value="F:transmembrane transporter activity"/>
    <property type="evidence" value="ECO:0007669"/>
    <property type="project" value="InterPro"/>
</dbReference>
<dbReference type="GO" id="GO:0006865">
    <property type="term" value="P:amino acid transport"/>
    <property type="evidence" value="ECO:0007669"/>
    <property type="project" value="UniProtKB-KW"/>
</dbReference>
<dbReference type="Gene3D" id="1.20.1740.10">
    <property type="entry name" value="Amino acid/polyamine transporter I"/>
    <property type="match status" value="1"/>
</dbReference>
<dbReference type="InterPro" id="IPR002293">
    <property type="entry name" value="AA/rel_permease1"/>
</dbReference>
<dbReference type="InterPro" id="IPR050367">
    <property type="entry name" value="APC_superfamily"/>
</dbReference>
<dbReference type="PANTHER" id="PTHR42770">
    <property type="entry name" value="AMINO ACID TRANSPORTER-RELATED"/>
    <property type="match status" value="1"/>
</dbReference>
<dbReference type="PANTHER" id="PTHR42770:SF15">
    <property type="entry name" value="GLUTAMATE_GAMMA-AMINOBUTYRATE ANTIPORTER-RELATED"/>
    <property type="match status" value="1"/>
</dbReference>
<dbReference type="Pfam" id="PF13520">
    <property type="entry name" value="AA_permease_2"/>
    <property type="match status" value="1"/>
</dbReference>
<dbReference type="PIRSF" id="PIRSF006060">
    <property type="entry name" value="AA_transporter"/>
    <property type="match status" value="1"/>
</dbReference>
<feature type="chain" id="PRO_0000442544" description="Aspartate/glutamate permease AcaP">
    <location>
        <begin position="1"/>
        <end position="489"/>
    </location>
</feature>
<feature type="transmembrane region" description="Helical" evidence="1">
    <location>
        <begin position="6"/>
        <end position="26"/>
    </location>
</feature>
<feature type="transmembrane region" description="Helical" evidence="1">
    <location>
        <begin position="36"/>
        <end position="56"/>
    </location>
</feature>
<feature type="transmembrane region" description="Helical" evidence="1">
    <location>
        <begin position="91"/>
        <end position="111"/>
    </location>
</feature>
<feature type="transmembrane region" description="Helical" evidence="1">
    <location>
        <begin position="122"/>
        <end position="142"/>
    </location>
</feature>
<feature type="transmembrane region" description="Helical" evidence="1">
    <location>
        <begin position="152"/>
        <end position="172"/>
    </location>
</feature>
<feature type="transmembrane region" description="Helical" evidence="1">
    <location>
        <begin position="195"/>
        <end position="215"/>
    </location>
</feature>
<feature type="transmembrane region" description="Helical" evidence="1">
    <location>
        <begin position="238"/>
        <end position="258"/>
    </location>
</feature>
<feature type="transmembrane region" description="Helical" evidence="1">
    <location>
        <begin position="290"/>
        <end position="310"/>
    </location>
</feature>
<feature type="transmembrane region" description="Helical" evidence="1">
    <location>
        <begin position="342"/>
        <end position="362"/>
    </location>
</feature>
<feature type="transmembrane region" description="Helical" evidence="1">
    <location>
        <begin position="373"/>
        <end position="393"/>
    </location>
</feature>
<feature type="transmembrane region" description="Helical" evidence="1">
    <location>
        <begin position="413"/>
        <end position="433"/>
    </location>
</feature>
<feature type="transmembrane region" description="Helical" evidence="1">
    <location>
        <begin position="449"/>
        <end position="469"/>
    </location>
</feature>
<protein>
    <recommendedName>
        <fullName evidence="4">Aspartate/glutamate permease AcaP</fullName>
    </recommendedName>
</protein>
<reference key="1">
    <citation type="journal article" date="2007" name="J. Bacteriol.">
        <title>The complete genome sequence of the lactic acid bacterial paradigm Lactococcus lactis subsp. cremoris MG1363.</title>
        <authorList>
            <person name="Wegmann U."/>
            <person name="O'Connell-Motherway M."/>
            <person name="Zomer A."/>
            <person name="Buist G."/>
            <person name="Shearman C."/>
            <person name="Canchaya C."/>
            <person name="Ventura M."/>
            <person name="Goesmann A."/>
            <person name="Gasson M.J."/>
            <person name="Kuipers O.P."/>
            <person name="van Sinderen D."/>
            <person name="Kok J."/>
        </authorList>
    </citation>
    <scope>NUCLEOTIDE SEQUENCE [LARGE SCALE GENOMIC DNA]</scope>
    <source>
        <strain>MG1363</strain>
    </source>
</reference>
<reference key="2">
    <citation type="journal article" date="2013" name="J. Bacteriol.">
        <title>Cloning, expression, and functional characterization of secondary amino acid transporters of Lactococcus lactis.</title>
        <authorList>
            <person name="Trip H."/>
            <person name="Mulder N.L."/>
            <person name="Lolkema J.S."/>
        </authorList>
    </citation>
    <scope>FUNCTION</scope>
    <scope>DISRUPTION PHENOTYPE</scope>
    <source>
        <strain>MG1363</strain>
    </source>
</reference>